<name>RS5_SINMW</name>
<comment type="function">
    <text evidence="1">With S4 and S12 plays an important role in translational accuracy.</text>
</comment>
<comment type="function">
    <text evidence="1">Located at the back of the 30S subunit body where it stabilizes the conformation of the head with respect to the body.</text>
</comment>
<comment type="subunit">
    <text evidence="1">Part of the 30S ribosomal subunit. Contacts proteins S4 and S8.</text>
</comment>
<comment type="domain">
    <text>The N-terminal domain interacts with the head of the 30S subunit; the C-terminal domain interacts with the body and contacts protein S4. The interaction surface between S4 and S5 is involved in control of translational fidelity.</text>
</comment>
<comment type="similarity">
    <text evidence="1">Belongs to the universal ribosomal protein uS5 family.</text>
</comment>
<reference key="1">
    <citation type="submission" date="2007-06" db="EMBL/GenBank/DDBJ databases">
        <title>Complete sequence of Sinorhizobium medicae WSM419 chromosome.</title>
        <authorList>
            <consortium name="US DOE Joint Genome Institute"/>
            <person name="Copeland A."/>
            <person name="Lucas S."/>
            <person name="Lapidus A."/>
            <person name="Barry K."/>
            <person name="Glavina del Rio T."/>
            <person name="Dalin E."/>
            <person name="Tice H."/>
            <person name="Pitluck S."/>
            <person name="Chain P."/>
            <person name="Malfatti S."/>
            <person name="Shin M."/>
            <person name="Vergez L."/>
            <person name="Schmutz J."/>
            <person name="Larimer F."/>
            <person name="Land M."/>
            <person name="Hauser L."/>
            <person name="Kyrpides N."/>
            <person name="Mikhailova N."/>
            <person name="Reeve W.G."/>
            <person name="Richardson P."/>
        </authorList>
    </citation>
    <scope>NUCLEOTIDE SEQUENCE [LARGE SCALE GENOMIC DNA]</scope>
    <source>
        <strain>WSM419</strain>
    </source>
</reference>
<protein>
    <recommendedName>
        <fullName evidence="1">Small ribosomal subunit protein uS5</fullName>
    </recommendedName>
    <alternativeName>
        <fullName evidence="2">30S ribosomal protein S5</fullName>
    </alternativeName>
</protein>
<keyword id="KW-0687">Ribonucleoprotein</keyword>
<keyword id="KW-0689">Ribosomal protein</keyword>
<keyword id="KW-0694">RNA-binding</keyword>
<keyword id="KW-0699">rRNA-binding</keyword>
<proteinExistence type="inferred from homology"/>
<feature type="chain" id="PRO_1000086058" description="Small ribosomal subunit protein uS5">
    <location>
        <begin position="1"/>
        <end position="189"/>
    </location>
</feature>
<feature type="domain" description="S5 DRBM" evidence="1">
    <location>
        <begin position="22"/>
        <end position="85"/>
    </location>
</feature>
<dbReference type="EMBL" id="CP000738">
    <property type="protein sequence ID" value="ABR59856.1"/>
    <property type="molecule type" value="Genomic_DNA"/>
</dbReference>
<dbReference type="RefSeq" id="WP_003536510.1">
    <property type="nucleotide sequence ID" value="NC_009636.1"/>
</dbReference>
<dbReference type="RefSeq" id="YP_001326691.1">
    <property type="nucleotide sequence ID" value="NC_009636.1"/>
</dbReference>
<dbReference type="SMR" id="A6U876"/>
<dbReference type="STRING" id="366394.Smed_1003"/>
<dbReference type="GeneID" id="89575697"/>
<dbReference type="KEGG" id="smd:Smed_1003"/>
<dbReference type="PATRIC" id="fig|366394.8.peg.4124"/>
<dbReference type="eggNOG" id="COG0098">
    <property type="taxonomic scope" value="Bacteria"/>
</dbReference>
<dbReference type="HOGENOM" id="CLU_065898_2_2_5"/>
<dbReference type="OrthoDB" id="9809045at2"/>
<dbReference type="Proteomes" id="UP000001108">
    <property type="component" value="Chromosome"/>
</dbReference>
<dbReference type="GO" id="GO:0015935">
    <property type="term" value="C:small ribosomal subunit"/>
    <property type="evidence" value="ECO:0007669"/>
    <property type="project" value="InterPro"/>
</dbReference>
<dbReference type="GO" id="GO:0019843">
    <property type="term" value="F:rRNA binding"/>
    <property type="evidence" value="ECO:0007669"/>
    <property type="project" value="UniProtKB-UniRule"/>
</dbReference>
<dbReference type="GO" id="GO:0003735">
    <property type="term" value="F:structural constituent of ribosome"/>
    <property type="evidence" value="ECO:0007669"/>
    <property type="project" value="InterPro"/>
</dbReference>
<dbReference type="GO" id="GO:0006412">
    <property type="term" value="P:translation"/>
    <property type="evidence" value="ECO:0007669"/>
    <property type="project" value="UniProtKB-UniRule"/>
</dbReference>
<dbReference type="FunFam" id="3.30.160.20:FF:000001">
    <property type="entry name" value="30S ribosomal protein S5"/>
    <property type="match status" value="1"/>
</dbReference>
<dbReference type="FunFam" id="3.30.230.10:FF:000002">
    <property type="entry name" value="30S ribosomal protein S5"/>
    <property type="match status" value="1"/>
</dbReference>
<dbReference type="Gene3D" id="3.30.160.20">
    <property type="match status" value="1"/>
</dbReference>
<dbReference type="Gene3D" id="3.30.230.10">
    <property type="match status" value="1"/>
</dbReference>
<dbReference type="HAMAP" id="MF_01307_B">
    <property type="entry name" value="Ribosomal_uS5_B"/>
    <property type="match status" value="1"/>
</dbReference>
<dbReference type="InterPro" id="IPR020568">
    <property type="entry name" value="Ribosomal_Su5_D2-typ_SF"/>
</dbReference>
<dbReference type="InterPro" id="IPR000851">
    <property type="entry name" value="Ribosomal_uS5"/>
</dbReference>
<dbReference type="InterPro" id="IPR005712">
    <property type="entry name" value="Ribosomal_uS5_bac-type"/>
</dbReference>
<dbReference type="InterPro" id="IPR005324">
    <property type="entry name" value="Ribosomal_uS5_C"/>
</dbReference>
<dbReference type="InterPro" id="IPR013810">
    <property type="entry name" value="Ribosomal_uS5_N"/>
</dbReference>
<dbReference type="InterPro" id="IPR018192">
    <property type="entry name" value="Ribosomal_uS5_N_CS"/>
</dbReference>
<dbReference type="InterPro" id="IPR014721">
    <property type="entry name" value="Ribsml_uS5_D2-typ_fold_subgr"/>
</dbReference>
<dbReference type="NCBIfam" id="TIGR01021">
    <property type="entry name" value="rpsE_bact"/>
    <property type="match status" value="1"/>
</dbReference>
<dbReference type="PANTHER" id="PTHR48277">
    <property type="entry name" value="MITOCHONDRIAL RIBOSOMAL PROTEIN S5"/>
    <property type="match status" value="1"/>
</dbReference>
<dbReference type="PANTHER" id="PTHR48277:SF1">
    <property type="entry name" value="MITOCHONDRIAL RIBOSOMAL PROTEIN S5"/>
    <property type="match status" value="1"/>
</dbReference>
<dbReference type="Pfam" id="PF00333">
    <property type="entry name" value="Ribosomal_S5"/>
    <property type="match status" value="1"/>
</dbReference>
<dbReference type="Pfam" id="PF03719">
    <property type="entry name" value="Ribosomal_S5_C"/>
    <property type="match status" value="1"/>
</dbReference>
<dbReference type="SUPFAM" id="SSF54768">
    <property type="entry name" value="dsRNA-binding domain-like"/>
    <property type="match status" value="1"/>
</dbReference>
<dbReference type="SUPFAM" id="SSF54211">
    <property type="entry name" value="Ribosomal protein S5 domain 2-like"/>
    <property type="match status" value="1"/>
</dbReference>
<dbReference type="PROSITE" id="PS00585">
    <property type="entry name" value="RIBOSOMAL_S5"/>
    <property type="match status" value="1"/>
</dbReference>
<dbReference type="PROSITE" id="PS50881">
    <property type="entry name" value="S5_DSRBD"/>
    <property type="match status" value="1"/>
</dbReference>
<evidence type="ECO:0000255" key="1">
    <source>
        <dbReference type="HAMAP-Rule" id="MF_01307"/>
    </source>
</evidence>
<evidence type="ECO:0000305" key="2"/>
<organism>
    <name type="scientific">Sinorhizobium medicae (strain WSM419)</name>
    <name type="common">Ensifer medicae</name>
    <dbReference type="NCBI Taxonomy" id="366394"/>
    <lineage>
        <taxon>Bacteria</taxon>
        <taxon>Pseudomonadati</taxon>
        <taxon>Pseudomonadota</taxon>
        <taxon>Alphaproteobacteria</taxon>
        <taxon>Hyphomicrobiales</taxon>
        <taxon>Rhizobiaceae</taxon>
        <taxon>Sinorhizobium/Ensifer group</taxon>
        <taxon>Sinorhizobium</taxon>
    </lineage>
</organism>
<gene>
    <name evidence="1" type="primary">rpsE</name>
    <name type="ordered locus">Smed_1003</name>
</gene>
<accession>A6U876</accession>
<sequence length="189" mass="20575">MAQERRGSREDRQNREERDSEFVDKLVAINRVAKVVKGGRRFGFAALVVVGDQKGRVGFGHGKAREVPEAIRKATEAAKRDLIFVPLRGGRTLHHDVHGRHGAGKVLLRSAKPGTGIIAGGPMRAVFETLGVHDVVAKSTGSSNPYNMVRATFDALKNQMHPKDIAAQRGMKYATLQSRRVSAGVASEE</sequence>